<proteinExistence type="inferred from homology"/>
<organism>
    <name type="scientific">Vibrio cholerae serotype O1 (strain ATCC 39315 / El Tor Inaba N16961)</name>
    <dbReference type="NCBI Taxonomy" id="243277"/>
    <lineage>
        <taxon>Bacteria</taxon>
        <taxon>Pseudomonadati</taxon>
        <taxon>Pseudomonadota</taxon>
        <taxon>Gammaproteobacteria</taxon>
        <taxon>Vibrionales</taxon>
        <taxon>Vibrionaceae</taxon>
        <taxon>Vibrio</taxon>
    </lineage>
</organism>
<keyword id="KW-0963">Cytoplasm</keyword>
<keyword id="KW-0255">Endonuclease</keyword>
<keyword id="KW-0378">Hydrolase</keyword>
<keyword id="KW-0460">Magnesium</keyword>
<keyword id="KW-0479">Metal-binding</keyword>
<keyword id="KW-0540">Nuclease</keyword>
<keyword id="KW-1185">Reference proteome</keyword>
<comment type="function">
    <text evidence="1">Endonuclease that specifically degrades the RNA of RNA-DNA hybrids.</text>
</comment>
<comment type="catalytic activity">
    <reaction evidence="1">
        <text>Endonucleolytic cleavage to 5'-phosphomonoester.</text>
        <dbReference type="EC" id="3.1.26.4"/>
    </reaction>
</comment>
<comment type="cofactor">
    <cofactor evidence="1">
        <name>Mg(2+)</name>
        <dbReference type="ChEBI" id="CHEBI:18420"/>
    </cofactor>
    <text evidence="1">Binds 1 Mg(2+) ion per subunit. May bind a second metal ion at a regulatory site, or after substrate binding.</text>
</comment>
<comment type="subunit">
    <text evidence="1">Monomer.</text>
</comment>
<comment type="subcellular location">
    <subcellularLocation>
        <location evidence="1">Cytoplasm</location>
    </subcellularLocation>
</comment>
<comment type="similarity">
    <text evidence="1">Belongs to the RNase H family.</text>
</comment>
<evidence type="ECO:0000255" key="1">
    <source>
        <dbReference type="HAMAP-Rule" id="MF_00042"/>
    </source>
</evidence>
<evidence type="ECO:0000255" key="2">
    <source>
        <dbReference type="PROSITE-ProRule" id="PRU00408"/>
    </source>
</evidence>
<evidence type="ECO:0000256" key="3">
    <source>
        <dbReference type="SAM" id="MobiDB-lite"/>
    </source>
</evidence>
<protein>
    <recommendedName>
        <fullName evidence="1">Ribonuclease HI</fullName>
        <shortName evidence="1">RNase HI</shortName>
        <ecNumber evidence="1">3.1.26.4</ecNumber>
    </recommendedName>
</protein>
<reference key="1">
    <citation type="journal article" date="2000" name="Nature">
        <title>DNA sequence of both chromosomes of the cholera pathogen Vibrio cholerae.</title>
        <authorList>
            <person name="Heidelberg J.F."/>
            <person name="Eisen J.A."/>
            <person name="Nelson W.C."/>
            <person name="Clayton R.A."/>
            <person name="Gwinn M.L."/>
            <person name="Dodson R.J."/>
            <person name="Haft D.H."/>
            <person name="Hickey E.K."/>
            <person name="Peterson J.D."/>
            <person name="Umayam L.A."/>
            <person name="Gill S.R."/>
            <person name="Nelson K.E."/>
            <person name="Read T.D."/>
            <person name="Tettelin H."/>
            <person name="Richardson D.L."/>
            <person name="Ermolaeva M.D."/>
            <person name="Vamathevan J.J."/>
            <person name="Bass S."/>
            <person name="Qin H."/>
            <person name="Dragoi I."/>
            <person name="Sellers P."/>
            <person name="McDonald L.A."/>
            <person name="Utterback T.R."/>
            <person name="Fleischmann R.D."/>
            <person name="Nierman W.C."/>
            <person name="White O."/>
            <person name="Salzberg S.L."/>
            <person name="Smith H.O."/>
            <person name="Colwell R.R."/>
            <person name="Mekalanos J.J."/>
            <person name="Venter J.C."/>
            <person name="Fraser C.M."/>
        </authorList>
    </citation>
    <scope>NUCLEOTIDE SEQUENCE [LARGE SCALE GENOMIC DNA]</scope>
    <source>
        <strain>ATCC 39315 / El Tor Inaba N16961</strain>
    </source>
</reference>
<sequence length="156" mass="17953">MNKQVEIFTDGSCLGNPGPGGYGIVMRYKQVEKTLARGYRLTTNNRMEMLAAVMALQALKEPCRVILTTDSQYVRQGITQWIHNWKLRGWKTADKKPVKNADLWQALDKETARHQVEWRWVKGHAGHRENEMCDELARQAAENPTEDDIGYQPEPQ</sequence>
<feature type="chain" id="PRO_0000195415" description="Ribonuclease HI">
    <location>
        <begin position="1"/>
        <end position="156"/>
    </location>
</feature>
<feature type="domain" description="RNase H type-1" evidence="2">
    <location>
        <begin position="1"/>
        <end position="142"/>
    </location>
</feature>
<feature type="region of interest" description="Disordered" evidence="3">
    <location>
        <begin position="135"/>
        <end position="156"/>
    </location>
</feature>
<feature type="binding site" evidence="1">
    <location>
        <position position="10"/>
    </location>
    <ligand>
        <name>Mg(2+)</name>
        <dbReference type="ChEBI" id="CHEBI:18420"/>
        <label>1</label>
    </ligand>
</feature>
<feature type="binding site" evidence="1">
    <location>
        <position position="10"/>
    </location>
    <ligand>
        <name>Mg(2+)</name>
        <dbReference type="ChEBI" id="CHEBI:18420"/>
        <label>2</label>
    </ligand>
</feature>
<feature type="binding site" evidence="1">
    <location>
        <position position="48"/>
    </location>
    <ligand>
        <name>Mg(2+)</name>
        <dbReference type="ChEBI" id="CHEBI:18420"/>
        <label>1</label>
    </ligand>
</feature>
<feature type="binding site" evidence="1">
    <location>
        <position position="70"/>
    </location>
    <ligand>
        <name>Mg(2+)</name>
        <dbReference type="ChEBI" id="CHEBI:18420"/>
        <label>1</label>
    </ligand>
</feature>
<feature type="binding site" evidence="1">
    <location>
        <position position="134"/>
    </location>
    <ligand>
        <name>Mg(2+)</name>
        <dbReference type="ChEBI" id="CHEBI:18420"/>
        <label>2</label>
    </ligand>
</feature>
<name>RNH_VIBCH</name>
<dbReference type="EC" id="3.1.26.4" evidence="1"/>
<dbReference type="EMBL" id="AE003852">
    <property type="protein sequence ID" value="AAF95378.1"/>
    <property type="molecule type" value="Genomic_DNA"/>
</dbReference>
<dbReference type="PIR" id="G82101">
    <property type="entry name" value="G82101"/>
</dbReference>
<dbReference type="RefSeq" id="NP_231865.1">
    <property type="nucleotide sequence ID" value="NC_002505.1"/>
</dbReference>
<dbReference type="RefSeq" id="WP_001041874.1">
    <property type="nucleotide sequence ID" value="NZ_LT906614.1"/>
</dbReference>
<dbReference type="SMR" id="Q9KPX8"/>
<dbReference type="STRING" id="243277.VC_2234"/>
<dbReference type="DNASU" id="2613156"/>
<dbReference type="EnsemblBacteria" id="AAF95378">
    <property type="protein sequence ID" value="AAF95378"/>
    <property type="gene ID" value="VC_2234"/>
</dbReference>
<dbReference type="KEGG" id="vch:VC_2234"/>
<dbReference type="PATRIC" id="fig|243277.26.peg.2131"/>
<dbReference type="eggNOG" id="COG0328">
    <property type="taxonomic scope" value="Bacteria"/>
</dbReference>
<dbReference type="HOGENOM" id="CLU_030894_6_0_6"/>
<dbReference type="Proteomes" id="UP000000584">
    <property type="component" value="Chromosome 1"/>
</dbReference>
<dbReference type="GO" id="GO:0005737">
    <property type="term" value="C:cytoplasm"/>
    <property type="evidence" value="ECO:0007669"/>
    <property type="project" value="UniProtKB-SubCell"/>
</dbReference>
<dbReference type="GO" id="GO:0000287">
    <property type="term" value="F:magnesium ion binding"/>
    <property type="evidence" value="ECO:0007669"/>
    <property type="project" value="UniProtKB-UniRule"/>
</dbReference>
<dbReference type="GO" id="GO:0003676">
    <property type="term" value="F:nucleic acid binding"/>
    <property type="evidence" value="ECO:0007669"/>
    <property type="project" value="InterPro"/>
</dbReference>
<dbReference type="GO" id="GO:0004523">
    <property type="term" value="F:RNA-DNA hybrid ribonuclease activity"/>
    <property type="evidence" value="ECO:0000318"/>
    <property type="project" value="GO_Central"/>
</dbReference>
<dbReference type="GO" id="GO:0043137">
    <property type="term" value="P:DNA replication, removal of RNA primer"/>
    <property type="evidence" value="ECO:0000318"/>
    <property type="project" value="GO_Central"/>
</dbReference>
<dbReference type="CDD" id="cd09278">
    <property type="entry name" value="RNase_HI_prokaryote_like"/>
    <property type="match status" value="1"/>
</dbReference>
<dbReference type="FunFam" id="3.30.420.10:FF:000008">
    <property type="entry name" value="Ribonuclease H"/>
    <property type="match status" value="1"/>
</dbReference>
<dbReference type="Gene3D" id="3.30.420.10">
    <property type="entry name" value="Ribonuclease H-like superfamily/Ribonuclease H"/>
    <property type="match status" value="1"/>
</dbReference>
<dbReference type="HAMAP" id="MF_00042">
    <property type="entry name" value="RNase_H"/>
    <property type="match status" value="1"/>
</dbReference>
<dbReference type="InterPro" id="IPR050092">
    <property type="entry name" value="RNase_H"/>
</dbReference>
<dbReference type="InterPro" id="IPR012337">
    <property type="entry name" value="RNaseH-like_sf"/>
</dbReference>
<dbReference type="InterPro" id="IPR002156">
    <property type="entry name" value="RNaseH_domain"/>
</dbReference>
<dbReference type="InterPro" id="IPR036397">
    <property type="entry name" value="RNaseH_sf"/>
</dbReference>
<dbReference type="InterPro" id="IPR022892">
    <property type="entry name" value="RNaseHI"/>
</dbReference>
<dbReference type="NCBIfam" id="NF001236">
    <property type="entry name" value="PRK00203.1"/>
    <property type="match status" value="1"/>
</dbReference>
<dbReference type="PANTHER" id="PTHR10642">
    <property type="entry name" value="RIBONUCLEASE H1"/>
    <property type="match status" value="1"/>
</dbReference>
<dbReference type="PANTHER" id="PTHR10642:SF26">
    <property type="entry name" value="RIBONUCLEASE H1"/>
    <property type="match status" value="1"/>
</dbReference>
<dbReference type="Pfam" id="PF00075">
    <property type="entry name" value="RNase_H"/>
    <property type="match status" value="1"/>
</dbReference>
<dbReference type="SUPFAM" id="SSF53098">
    <property type="entry name" value="Ribonuclease H-like"/>
    <property type="match status" value="1"/>
</dbReference>
<dbReference type="PROSITE" id="PS50879">
    <property type="entry name" value="RNASE_H_1"/>
    <property type="match status" value="1"/>
</dbReference>
<accession>Q9KPX8</accession>
<gene>
    <name evidence="1" type="primary">rnhA</name>
    <name type="ordered locus">VC_2234</name>
</gene>